<feature type="chain" id="PRO_0000423033" description="Basic phospholipase A2 BnpTX-2">
    <location>
        <begin position="1"/>
        <end position="35" status="greater than"/>
    </location>
</feature>
<feature type="binding site" evidence="1">
    <location>
        <position position="27"/>
    </location>
    <ligand>
        <name>Ca(2+)</name>
        <dbReference type="ChEBI" id="CHEBI:29108"/>
    </ligand>
</feature>
<feature type="binding site" evidence="1">
    <location>
        <position position="29"/>
    </location>
    <ligand>
        <name>Ca(2+)</name>
        <dbReference type="ChEBI" id="CHEBI:29108"/>
    </ligand>
</feature>
<feature type="binding site" evidence="1">
    <location>
        <position position="31"/>
    </location>
    <ligand>
        <name>Ca(2+)</name>
        <dbReference type="ChEBI" id="CHEBI:29108"/>
    </ligand>
</feature>
<feature type="disulfide bond" evidence="1">
    <location>
        <begin position="26"/>
        <end status="unknown"/>
    </location>
</feature>
<feature type="disulfide bond" evidence="1">
    <location>
        <begin position="28"/>
        <end status="unknown"/>
    </location>
</feature>
<feature type="non-terminal residue">
    <location>
        <position position="35"/>
    </location>
</feature>
<evidence type="ECO:0000250" key="1"/>
<evidence type="ECO:0000269" key="2">
    <source>
    </source>
</evidence>
<evidence type="ECO:0000305" key="3"/>
<evidence type="ECO:0000305" key="4">
    <source>
    </source>
</evidence>
<sequence length="35" mass="4051">SLWEFAQMILEETKRLPFPYYGAYGCYCGWGGQGQ</sequence>
<dbReference type="EC" id="3.1.1.4"/>
<dbReference type="SMR" id="P0DM52"/>
<dbReference type="GO" id="GO:0005576">
    <property type="term" value="C:extracellular region"/>
    <property type="evidence" value="ECO:0007669"/>
    <property type="project" value="UniProtKB-SubCell"/>
</dbReference>
<dbReference type="GO" id="GO:0005509">
    <property type="term" value="F:calcium ion binding"/>
    <property type="evidence" value="ECO:0007669"/>
    <property type="project" value="InterPro"/>
</dbReference>
<dbReference type="GO" id="GO:0004623">
    <property type="term" value="F:phospholipase A2 activity"/>
    <property type="evidence" value="ECO:0007669"/>
    <property type="project" value="UniProtKB-EC"/>
</dbReference>
<dbReference type="GO" id="GO:0090729">
    <property type="term" value="F:toxin activity"/>
    <property type="evidence" value="ECO:0007669"/>
    <property type="project" value="UniProtKB-KW"/>
</dbReference>
<dbReference type="GO" id="GO:0050482">
    <property type="term" value="P:arachidonate secretion"/>
    <property type="evidence" value="ECO:0007669"/>
    <property type="project" value="InterPro"/>
</dbReference>
<dbReference type="GO" id="GO:0016042">
    <property type="term" value="P:lipid catabolic process"/>
    <property type="evidence" value="ECO:0007669"/>
    <property type="project" value="UniProtKB-KW"/>
</dbReference>
<dbReference type="GO" id="GO:0006644">
    <property type="term" value="P:phospholipid metabolic process"/>
    <property type="evidence" value="ECO:0007669"/>
    <property type="project" value="InterPro"/>
</dbReference>
<dbReference type="Gene3D" id="1.20.90.10">
    <property type="entry name" value="Phospholipase A2 domain"/>
    <property type="match status" value="1"/>
</dbReference>
<dbReference type="InterPro" id="IPR001211">
    <property type="entry name" value="PLipase_A2"/>
</dbReference>
<dbReference type="InterPro" id="IPR016090">
    <property type="entry name" value="PLipase_A2_dom"/>
</dbReference>
<dbReference type="InterPro" id="IPR036444">
    <property type="entry name" value="PLipase_A2_dom_sf"/>
</dbReference>
<dbReference type="Pfam" id="PF00068">
    <property type="entry name" value="Phospholip_A2_1"/>
    <property type="match status" value="1"/>
</dbReference>
<dbReference type="PRINTS" id="PR00389">
    <property type="entry name" value="PHPHLIPASEA2"/>
</dbReference>
<dbReference type="SUPFAM" id="SSF48619">
    <property type="entry name" value="Phospholipase A2, PLA2"/>
    <property type="match status" value="1"/>
</dbReference>
<comment type="function">
    <text evidence="2">Snake venom phospholipase A2 (PLA2). In vitro, shows anticoagulant activity and induces cytotoxicity when tested on C2C12 myoblasts/myotubes. In vivo, when tested on mice, induces myotoxicity (intramuscular injection), edema (injection in the subplantar region) and lethality. The catalytic and anticoagulant activities of BnpTX-II are lower than those of BnpTX-I. PLA2 catalyzes the calcium-dependent hydrolysis of the 2-acyl groups in 3-sn-phosphoglycerides.</text>
</comment>
<comment type="catalytic activity">
    <reaction evidence="2">
        <text>a 1,2-diacyl-sn-glycero-3-phosphocholine + H2O = a 1-acyl-sn-glycero-3-phosphocholine + a fatty acid + H(+)</text>
        <dbReference type="Rhea" id="RHEA:15801"/>
        <dbReference type="ChEBI" id="CHEBI:15377"/>
        <dbReference type="ChEBI" id="CHEBI:15378"/>
        <dbReference type="ChEBI" id="CHEBI:28868"/>
        <dbReference type="ChEBI" id="CHEBI:57643"/>
        <dbReference type="ChEBI" id="CHEBI:58168"/>
        <dbReference type="EC" id="3.1.1.4"/>
    </reaction>
</comment>
<comment type="cofactor">
    <cofactor evidence="1">
        <name>Ca(2+)</name>
        <dbReference type="ChEBI" id="CHEBI:29108"/>
    </cofactor>
    <text evidence="1">Binds 1 Ca(2+) ion.</text>
</comment>
<comment type="subunit">
    <text evidence="2">Dimer.</text>
</comment>
<comment type="subcellular location">
    <subcellularLocation>
        <location>Secreted</location>
    </subcellularLocation>
</comment>
<comment type="tissue specificity">
    <text>Expressed by the venom gland.</text>
</comment>
<comment type="PTM">
    <text>Contains 7 disulfide bonds.</text>
</comment>
<comment type="miscellaneous">
    <text evidence="4">Has a pI of approximately 7.8 and about 121 amino acids.</text>
</comment>
<comment type="similarity">
    <text evidence="3">Belongs to the phospholipase A2 family. Group II subfamily. D49 sub-subfamily.</text>
</comment>
<accession>P0DM52</accession>
<organism>
    <name type="scientific">Bothrops pauloensis</name>
    <name type="common">Neuwied's lancehead</name>
    <name type="synonym">Bothrops neuwiedi pauloensis</name>
    <dbReference type="NCBI Taxonomy" id="1042543"/>
    <lineage>
        <taxon>Eukaryota</taxon>
        <taxon>Metazoa</taxon>
        <taxon>Chordata</taxon>
        <taxon>Craniata</taxon>
        <taxon>Vertebrata</taxon>
        <taxon>Euteleostomi</taxon>
        <taxon>Lepidosauria</taxon>
        <taxon>Squamata</taxon>
        <taxon>Bifurcata</taxon>
        <taxon>Unidentata</taxon>
        <taxon>Episquamata</taxon>
        <taxon>Toxicofera</taxon>
        <taxon>Serpentes</taxon>
        <taxon>Colubroidea</taxon>
        <taxon>Viperidae</taxon>
        <taxon>Crotalinae</taxon>
        <taxon>Bothrops</taxon>
    </lineage>
</organism>
<proteinExistence type="evidence at protein level"/>
<protein>
    <recommendedName>
        <fullName>Basic phospholipase A2 BnpTX-2</fullName>
        <shortName>BnPTx-II</shortName>
        <shortName>svPLA2</shortName>
        <ecNumber>3.1.1.4</ecNumber>
    </recommendedName>
    <alternativeName>
        <fullName>Phosphatidylcholine 2-acylhydrolase</fullName>
    </alternativeName>
</protein>
<reference key="1">
    <citation type="journal article" date="2004" name="Toxicon">
        <title>Bactericidal and neurotoxic activities of two myotoxic phospholipases A2 from Bothrops neuwiedi pauloensis snake venom.</title>
        <authorList>
            <person name="Rodrigues V.M."/>
            <person name="Marcussi S."/>
            <person name="Cambraia R.S."/>
            <person name="de Araujo A.L."/>
            <person name="Malta-Neto N.R."/>
            <person name="Hamaguchi A."/>
            <person name="Ferro E.A."/>
            <person name="Homsi-Brandeburgo M.I."/>
            <person name="Giglio J.R."/>
            <person name="Soares A.M."/>
        </authorList>
    </citation>
    <scope>PROTEIN SEQUENCE</scope>
    <scope>FUNCTION</scope>
    <scope>BIOASSAY</scope>
    <scope>CATALYTIC ACTIVITY</scope>
    <scope>SUBUNIT</scope>
    <scope>DISULFIDE BONDS</scope>
    <source>
        <tissue>Venom</tissue>
    </source>
</reference>
<name>PA2B2_BOTPA</name>
<keyword id="KW-1203">Blood coagulation cascade inhibiting toxin</keyword>
<keyword id="KW-0106">Calcium</keyword>
<keyword id="KW-0903">Direct protein sequencing</keyword>
<keyword id="KW-1015">Disulfide bond</keyword>
<keyword id="KW-1199">Hemostasis impairing toxin</keyword>
<keyword id="KW-0378">Hydrolase</keyword>
<keyword id="KW-0442">Lipid degradation</keyword>
<keyword id="KW-0443">Lipid metabolism</keyword>
<keyword id="KW-0479">Metal-binding</keyword>
<keyword id="KW-0959">Myotoxin</keyword>
<keyword id="KW-0964">Secreted</keyword>
<keyword id="KW-0800">Toxin</keyword>